<sequence>MGSLETERKIVGWAATDSTGHLAPYTYSLRDTGPEDVFIKVISCGVCHTDIHQIKNDLGMSHYPMVPGHEVVGEVVEVGSDVTRFKVGDVVGVGVIVGSCKNCHPCKSEIEQYCNKKIWSYNDVYTDGKPTQGGFAESMVVHQKFVVRIPDGMSPEQAAPLLCAGLTVYSPLKHFGLKQSGLRGGILGLGGVGHMGVKIAKAMGHHVTVISSSDKKREEAMEHLGADEYLVSSDVESMQKAADQLDYIIDTVPVVHPLEPYLSLLKLDGKLILMGVINAPLQFVTPMVMLGRKSITGSFIGSMKETEEMLEFCKEKGVASMIEVIKMDYINTAFERLEKNDVRYRFVVDVAGSKLIH</sequence>
<evidence type="ECO:0000250" key="1">
    <source>
        <dbReference type="UniProtKB" id="O49482"/>
    </source>
</evidence>
<evidence type="ECO:0000305" key="2"/>
<keyword id="KW-0438">Lignin biosynthesis</keyword>
<keyword id="KW-0479">Metal-binding</keyword>
<keyword id="KW-0521">NADP</keyword>
<keyword id="KW-0560">Oxidoreductase</keyword>
<keyword id="KW-0862">Zinc</keyword>
<dbReference type="EC" id="1.1.1.195" evidence="1"/>
<dbReference type="EMBL" id="Z19568">
    <property type="protein sequence ID" value="CAA79622.1"/>
    <property type="molecule type" value="mRNA"/>
</dbReference>
<dbReference type="PIR" id="S31571">
    <property type="entry name" value="S31571"/>
</dbReference>
<dbReference type="PIR" id="T09141">
    <property type="entry name" value="T09141"/>
</dbReference>
<dbReference type="SMR" id="P31657"/>
<dbReference type="UniPathway" id="UPA00711"/>
<dbReference type="GO" id="GO:0045551">
    <property type="term" value="F:cinnamyl-alcohol dehydrogenase activity"/>
    <property type="evidence" value="ECO:0007669"/>
    <property type="project" value="UniProtKB-EC"/>
</dbReference>
<dbReference type="GO" id="GO:0050268">
    <property type="term" value="F:coniferyl-alcohol dehydrogenase activity"/>
    <property type="evidence" value="ECO:0007669"/>
    <property type="project" value="RHEA"/>
</dbReference>
<dbReference type="GO" id="GO:0008270">
    <property type="term" value="F:zinc ion binding"/>
    <property type="evidence" value="ECO:0007669"/>
    <property type="project" value="InterPro"/>
</dbReference>
<dbReference type="GO" id="GO:0009809">
    <property type="term" value="P:lignin biosynthetic process"/>
    <property type="evidence" value="ECO:0007669"/>
    <property type="project" value="UniProtKB-KW"/>
</dbReference>
<dbReference type="CDD" id="cd05283">
    <property type="entry name" value="CAD1"/>
    <property type="match status" value="1"/>
</dbReference>
<dbReference type="FunFam" id="3.40.50.720:FF:000022">
    <property type="entry name" value="Cinnamyl alcohol dehydrogenase"/>
    <property type="match status" value="1"/>
</dbReference>
<dbReference type="FunFam" id="3.90.180.10:FF:000004">
    <property type="entry name" value="probable cinnamyl alcohol dehydrogenase"/>
    <property type="match status" value="1"/>
</dbReference>
<dbReference type="FunFam" id="3.90.180.10:FF:000100">
    <property type="entry name" value="Putative cinnamyl alcohol dehydrogenase 6"/>
    <property type="match status" value="1"/>
</dbReference>
<dbReference type="Gene3D" id="3.90.180.10">
    <property type="entry name" value="Medium-chain alcohol dehydrogenases, catalytic domain"/>
    <property type="match status" value="1"/>
</dbReference>
<dbReference type="Gene3D" id="3.40.50.720">
    <property type="entry name" value="NAD(P)-binding Rossmann-like Domain"/>
    <property type="match status" value="1"/>
</dbReference>
<dbReference type="InterPro" id="IPR013149">
    <property type="entry name" value="ADH-like_C"/>
</dbReference>
<dbReference type="InterPro" id="IPR013154">
    <property type="entry name" value="ADH-like_N"/>
</dbReference>
<dbReference type="InterPro" id="IPR002328">
    <property type="entry name" value="ADH_Zn_CS"/>
</dbReference>
<dbReference type="InterPro" id="IPR047109">
    <property type="entry name" value="CAD-like"/>
</dbReference>
<dbReference type="InterPro" id="IPR011032">
    <property type="entry name" value="GroES-like_sf"/>
</dbReference>
<dbReference type="InterPro" id="IPR036291">
    <property type="entry name" value="NAD(P)-bd_dom_sf"/>
</dbReference>
<dbReference type="InterPro" id="IPR020843">
    <property type="entry name" value="PKS_ER"/>
</dbReference>
<dbReference type="PANTHER" id="PTHR42683">
    <property type="entry name" value="ALDEHYDE REDUCTASE"/>
    <property type="match status" value="1"/>
</dbReference>
<dbReference type="Pfam" id="PF08240">
    <property type="entry name" value="ADH_N"/>
    <property type="match status" value="1"/>
</dbReference>
<dbReference type="Pfam" id="PF00107">
    <property type="entry name" value="ADH_zinc_N"/>
    <property type="match status" value="1"/>
</dbReference>
<dbReference type="SMART" id="SM00829">
    <property type="entry name" value="PKS_ER"/>
    <property type="match status" value="1"/>
</dbReference>
<dbReference type="SUPFAM" id="SSF50129">
    <property type="entry name" value="GroES-like"/>
    <property type="match status" value="1"/>
</dbReference>
<dbReference type="SUPFAM" id="SSF51735">
    <property type="entry name" value="NAD(P)-binding Rossmann-fold domains"/>
    <property type="match status" value="1"/>
</dbReference>
<dbReference type="PROSITE" id="PS00059">
    <property type="entry name" value="ADH_ZINC"/>
    <property type="match status" value="1"/>
</dbReference>
<reference key="1">
    <citation type="journal article" date="1995" name="Plant Physiol. Biochem.">
        <title>Isolation of cinnamyl alcohol dehydrogenase cDNAs from two important economic species: alfalfa and poplar. Demonstration of a high homology of the gene within angiosperms.</title>
        <authorList>
            <person name="van Doorsselaere J."/>
            <person name="Baucher M."/>
            <person name="Feuillet C."/>
            <person name="Boudet A.M."/>
            <person name="van Montagu M."/>
            <person name="Inze D."/>
        </authorList>
    </citation>
    <scope>NUCLEOTIDE SEQUENCE [MRNA]</scope>
    <source>
        <tissue>Leaf</tissue>
    </source>
</reference>
<accession>P31657</accession>
<comment type="function">
    <text evidence="1">Involved in lignin biosynthesis. Catalyzes the final step specific for the production of lignin monomers. Catalyzes the NADPH-dependent reduction of coniferaldehyde, 5-hydroxyconiferaldehyde, sinapaldehyde, 4-coumaraldehyde and caffeyl aldehyde to their respective alcohols.</text>
</comment>
<comment type="catalytic activity">
    <reaction evidence="1">
        <text>(E)-cinnamyl alcohol + NADP(+) = (E)-cinnamaldehyde + NADPH + H(+)</text>
        <dbReference type="Rhea" id="RHEA:10392"/>
        <dbReference type="ChEBI" id="CHEBI:15378"/>
        <dbReference type="ChEBI" id="CHEBI:16731"/>
        <dbReference type="ChEBI" id="CHEBI:33227"/>
        <dbReference type="ChEBI" id="CHEBI:57783"/>
        <dbReference type="ChEBI" id="CHEBI:58349"/>
        <dbReference type="EC" id="1.1.1.195"/>
    </reaction>
    <physiologicalReaction direction="right-to-left" evidence="1">
        <dbReference type="Rhea" id="RHEA:10394"/>
    </physiologicalReaction>
</comment>
<comment type="catalytic activity">
    <reaction evidence="1">
        <text>(E)-coniferol + NADP(+) = (E)-coniferaldehyde + NADPH + H(+)</text>
        <dbReference type="Rhea" id="RHEA:22444"/>
        <dbReference type="ChEBI" id="CHEBI:15378"/>
        <dbReference type="ChEBI" id="CHEBI:16547"/>
        <dbReference type="ChEBI" id="CHEBI:17745"/>
        <dbReference type="ChEBI" id="CHEBI:57783"/>
        <dbReference type="ChEBI" id="CHEBI:58349"/>
        <dbReference type="EC" id="1.1.1.195"/>
    </reaction>
    <physiologicalReaction direction="right-to-left" evidence="1">
        <dbReference type="Rhea" id="RHEA:22446"/>
    </physiologicalReaction>
</comment>
<comment type="catalytic activity">
    <reaction evidence="1">
        <text>(E)-sinapyl alcohol + NADP(+) = (E)-sinapaldehyde + NADPH + H(+)</text>
        <dbReference type="Rhea" id="RHEA:45704"/>
        <dbReference type="ChEBI" id="CHEBI:15378"/>
        <dbReference type="ChEBI" id="CHEBI:27949"/>
        <dbReference type="ChEBI" id="CHEBI:57783"/>
        <dbReference type="ChEBI" id="CHEBI:58349"/>
        <dbReference type="ChEBI" id="CHEBI:64557"/>
        <dbReference type="EC" id="1.1.1.195"/>
    </reaction>
    <physiologicalReaction direction="right-to-left" evidence="1">
        <dbReference type="Rhea" id="RHEA:45706"/>
    </physiologicalReaction>
</comment>
<comment type="catalytic activity">
    <reaction evidence="1">
        <text>(E)-4-coumaroyl alcohol + NADP(+) = (E)-4-coumaraldehyde + NADPH + H(+)</text>
        <dbReference type="Rhea" id="RHEA:45724"/>
        <dbReference type="ChEBI" id="CHEBI:15378"/>
        <dbReference type="ChEBI" id="CHEBI:28353"/>
        <dbReference type="ChEBI" id="CHEBI:57783"/>
        <dbReference type="ChEBI" id="CHEBI:58349"/>
        <dbReference type="ChEBI" id="CHEBI:64555"/>
        <dbReference type="EC" id="1.1.1.195"/>
    </reaction>
    <physiologicalReaction direction="right-to-left" evidence="1">
        <dbReference type="Rhea" id="RHEA:45726"/>
    </physiologicalReaction>
</comment>
<comment type="catalytic activity">
    <reaction evidence="1">
        <text>(E)-caffeyl alcohol + NADP(+) = (E)-caffeyl aldehyde + NADPH + H(+)</text>
        <dbReference type="Rhea" id="RHEA:45728"/>
        <dbReference type="ChEBI" id="CHEBI:15378"/>
        <dbReference type="ChEBI" id="CHEBI:28323"/>
        <dbReference type="ChEBI" id="CHEBI:31334"/>
        <dbReference type="ChEBI" id="CHEBI:57783"/>
        <dbReference type="ChEBI" id="CHEBI:58349"/>
    </reaction>
    <physiologicalReaction direction="right-to-left" evidence="1">
        <dbReference type="Rhea" id="RHEA:45730"/>
    </physiologicalReaction>
</comment>
<comment type="cofactor">
    <cofactor evidence="1">
        <name>Zn(2+)</name>
        <dbReference type="ChEBI" id="CHEBI:29105"/>
    </cofactor>
    <text evidence="1">Binds 2 Zn(2+) ions per subunit.</text>
</comment>
<comment type="pathway">
    <text evidence="1">Aromatic compound metabolism; phenylpropanoid biosynthesis.</text>
</comment>
<comment type="subunit">
    <text evidence="1">Homodimer.</text>
</comment>
<comment type="similarity">
    <text evidence="2">Belongs to the zinc-containing alcohol dehydrogenase family.</text>
</comment>
<name>CADH_POPDE</name>
<feature type="chain" id="PRO_0000160803" description="Probable cinnamyl alcohol dehydrogenase">
    <location>
        <begin position="1"/>
        <end position="357"/>
    </location>
</feature>
<feature type="binding site" evidence="1">
    <location>
        <position position="47"/>
    </location>
    <ligand>
        <name>Zn(2+)</name>
        <dbReference type="ChEBI" id="CHEBI:29105"/>
        <label>1</label>
        <note>catalytic</note>
    </ligand>
</feature>
<feature type="binding site" evidence="1">
    <location>
        <position position="49"/>
    </location>
    <ligand>
        <name>NADP(+)</name>
        <dbReference type="ChEBI" id="CHEBI:58349"/>
    </ligand>
</feature>
<feature type="binding site" evidence="1">
    <location>
        <position position="69"/>
    </location>
    <ligand>
        <name>Zn(2+)</name>
        <dbReference type="ChEBI" id="CHEBI:29105"/>
        <label>1</label>
        <note>catalytic</note>
    </ligand>
</feature>
<feature type="binding site" evidence="1">
    <location>
        <position position="70"/>
    </location>
    <ligand>
        <name>Zn(2+)</name>
        <dbReference type="ChEBI" id="CHEBI:29105"/>
        <label>1</label>
        <note>catalytic</note>
    </ligand>
</feature>
<feature type="binding site" evidence="1">
    <location>
        <position position="100"/>
    </location>
    <ligand>
        <name>Zn(2+)</name>
        <dbReference type="ChEBI" id="CHEBI:29105"/>
        <label>2</label>
    </ligand>
</feature>
<feature type="binding site" evidence="1">
    <location>
        <position position="103"/>
    </location>
    <ligand>
        <name>Zn(2+)</name>
        <dbReference type="ChEBI" id="CHEBI:29105"/>
        <label>2</label>
    </ligand>
</feature>
<feature type="binding site" evidence="1">
    <location>
        <position position="106"/>
    </location>
    <ligand>
        <name>Zn(2+)</name>
        <dbReference type="ChEBI" id="CHEBI:29105"/>
        <label>2</label>
    </ligand>
</feature>
<feature type="binding site" evidence="1">
    <location>
        <position position="114"/>
    </location>
    <ligand>
        <name>Zn(2+)</name>
        <dbReference type="ChEBI" id="CHEBI:29105"/>
        <label>2</label>
    </ligand>
</feature>
<feature type="binding site" evidence="1">
    <location>
        <position position="163"/>
    </location>
    <ligand>
        <name>Zn(2+)</name>
        <dbReference type="ChEBI" id="CHEBI:29105"/>
        <label>1</label>
        <note>catalytic</note>
    </ligand>
</feature>
<feature type="binding site" evidence="1">
    <location>
        <position position="167"/>
    </location>
    <ligand>
        <name>NADP(+)</name>
        <dbReference type="ChEBI" id="CHEBI:58349"/>
    </ligand>
</feature>
<feature type="binding site" evidence="1">
    <location>
        <begin position="188"/>
        <end position="193"/>
    </location>
    <ligand>
        <name>NADP(+)</name>
        <dbReference type="ChEBI" id="CHEBI:58349"/>
    </ligand>
</feature>
<feature type="binding site" evidence="1">
    <location>
        <begin position="211"/>
        <end position="216"/>
    </location>
    <ligand>
        <name>NADP(+)</name>
        <dbReference type="ChEBI" id="CHEBI:58349"/>
    </ligand>
</feature>
<feature type="binding site" evidence="1">
    <location>
        <position position="251"/>
    </location>
    <ligand>
        <name>NADP(+)</name>
        <dbReference type="ChEBI" id="CHEBI:58349"/>
    </ligand>
</feature>
<feature type="binding site" evidence="1">
    <location>
        <position position="275"/>
    </location>
    <ligand>
        <name>NADP(+)</name>
        <dbReference type="ChEBI" id="CHEBI:58349"/>
    </ligand>
</feature>
<feature type="binding site" evidence="1">
    <location>
        <begin position="298"/>
        <end position="300"/>
    </location>
    <ligand>
        <name>NADP(+)</name>
        <dbReference type="ChEBI" id="CHEBI:58349"/>
    </ligand>
</feature>
<protein>
    <recommendedName>
        <fullName>Probable cinnamyl alcohol dehydrogenase</fullName>
        <shortName>CAD</shortName>
        <ecNumber evidence="1">1.1.1.195</ecNumber>
    </recommendedName>
</protein>
<organism>
    <name type="scientific">Populus deltoides</name>
    <name type="common">Eastern poplar</name>
    <name type="synonym">Eastern cottonwood</name>
    <dbReference type="NCBI Taxonomy" id="3696"/>
    <lineage>
        <taxon>Eukaryota</taxon>
        <taxon>Viridiplantae</taxon>
        <taxon>Streptophyta</taxon>
        <taxon>Embryophyta</taxon>
        <taxon>Tracheophyta</taxon>
        <taxon>Spermatophyta</taxon>
        <taxon>Magnoliopsida</taxon>
        <taxon>eudicotyledons</taxon>
        <taxon>Gunneridae</taxon>
        <taxon>Pentapetalae</taxon>
        <taxon>rosids</taxon>
        <taxon>fabids</taxon>
        <taxon>Malpighiales</taxon>
        <taxon>Salicaceae</taxon>
        <taxon>Saliceae</taxon>
        <taxon>Populus</taxon>
    </lineage>
</organism>
<proteinExistence type="evidence at transcript level"/>